<proteinExistence type="inferred from homology"/>
<gene>
    <name type="ordered locus">CLH_1126</name>
</gene>
<accession>B2V3W3</accession>
<sequence length="85" mass="9823">MSKNIEHTMQFDLNKTKEALTKAILTEVYDSLQQKGYNPINQLVGYLISGDPTYITNYNGARALVRKLERDEILEEVIKSYLEIK</sequence>
<reference key="1">
    <citation type="submission" date="2008-05" db="EMBL/GenBank/DDBJ databases">
        <title>Complete genome sequence of Clostridium botulinum E3 str. Alaska E43.</title>
        <authorList>
            <person name="Brinkac L.M."/>
            <person name="Brown J.L."/>
            <person name="Bruce D."/>
            <person name="Detter C."/>
            <person name="Munk C."/>
            <person name="Smith L.A."/>
            <person name="Smith T.J."/>
            <person name="Sutton G."/>
            <person name="Brettin T.S."/>
        </authorList>
    </citation>
    <scope>NUCLEOTIDE SEQUENCE [LARGE SCALE GENOMIC DNA]</scope>
    <source>
        <strain>Alaska E43 / Type E3</strain>
    </source>
</reference>
<name>Y1126_CLOBA</name>
<protein>
    <recommendedName>
        <fullName evidence="1">UPF0297 protein CLH_1126</fullName>
    </recommendedName>
</protein>
<evidence type="ECO:0000255" key="1">
    <source>
        <dbReference type="HAMAP-Rule" id="MF_01507"/>
    </source>
</evidence>
<dbReference type="EMBL" id="CP001078">
    <property type="protein sequence ID" value="ACD51662.1"/>
    <property type="molecule type" value="Genomic_DNA"/>
</dbReference>
<dbReference type="RefSeq" id="WP_003372947.1">
    <property type="nucleotide sequence ID" value="NC_010723.1"/>
</dbReference>
<dbReference type="SMR" id="B2V3W3"/>
<dbReference type="KEGG" id="cbt:CLH_1126"/>
<dbReference type="HOGENOM" id="CLU_162466_0_0_9"/>
<dbReference type="HAMAP" id="MF_01507">
    <property type="entry name" value="UPF0297"/>
    <property type="match status" value="1"/>
</dbReference>
<dbReference type="InterPro" id="IPR009309">
    <property type="entry name" value="IreB"/>
</dbReference>
<dbReference type="NCBIfam" id="NF003997">
    <property type="entry name" value="PRK05473.1"/>
    <property type="match status" value="1"/>
</dbReference>
<dbReference type="PANTHER" id="PTHR40067">
    <property type="entry name" value="UPF0297 PROTEIN YRZL"/>
    <property type="match status" value="1"/>
</dbReference>
<dbReference type="PANTHER" id="PTHR40067:SF1">
    <property type="entry name" value="UPF0297 PROTEIN YRZL"/>
    <property type="match status" value="1"/>
</dbReference>
<dbReference type="Pfam" id="PF06135">
    <property type="entry name" value="IreB"/>
    <property type="match status" value="1"/>
</dbReference>
<dbReference type="PIRSF" id="PIRSF037258">
    <property type="entry name" value="DUF965_bac"/>
    <property type="match status" value="1"/>
</dbReference>
<comment type="similarity">
    <text evidence="1">Belongs to the UPF0297 family.</text>
</comment>
<organism>
    <name type="scientific">Clostridium botulinum (strain Alaska E43 / Type E3)</name>
    <dbReference type="NCBI Taxonomy" id="508767"/>
    <lineage>
        <taxon>Bacteria</taxon>
        <taxon>Bacillati</taxon>
        <taxon>Bacillota</taxon>
        <taxon>Clostridia</taxon>
        <taxon>Eubacteriales</taxon>
        <taxon>Clostridiaceae</taxon>
        <taxon>Clostridium</taxon>
    </lineage>
</organism>
<feature type="chain" id="PRO_1000198231" description="UPF0297 protein CLH_1126">
    <location>
        <begin position="1"/>
        <end position="85"/>
    </location>
</feature>